<sequence>MFDQLDIVEERYEQLNELLSDPDVVNDSDKLRKYSKEQADLQKTVDVYRNYKAKKEELADIEEMLSETDDKEEVEMLKEESNGIKAELPNLEEELKILLIPKDPNDDKDVIVEIRAAAGGDEAAIFAGDLMRMYSKYAESQGFKTEIVEASESDHGGYKEISFSVSGNGAYSKLKFENGAHRVQRVPETESGGRIHTSTATVAVLPEVEDVEIEIRNEDLKIDTYRSSGAGGQHVNTTDSAVRITHLPTGVIATSSEKSQIQNREKAMKVLKARLYDMKVQEEQQKYASQRKSAVGTGDRSERIRTYNYPQSRVTDHRIGLTLQKLGQIMEGHLEEIIDALTLSEQTDKLKELNNGEL</sequence>
<proteinExistence type="inferred from homology"/>
<gene>
    <name evidence="1" type="primary">prfA</name>
    <name type="ordered locus">SAHV_2102</name>
</gene>
<protein>
    <recommendedName>
        <fullName evidence="1">Peptide chain release factor 1</fullName>
        <shortName evidence="1">RF-1</shortName>
    </recommendedName>
</protein>
<evidence type="ECO:0000255" key="1">
    <source>
        <dbReference type="HAMAP-Rule" id="MF_00093"/>
    </source>
</evidence>
<keyword id="KW-0963">Cytoplasm</keyword>
<keyword id="KW-0488">Methylation</keyword>
<keyword id="KW-0648">Protein biosynthesis</keyword>
<feature type="chain" id="PRO_1000004956" description="Peptide chain release factor 1">
    <location>
        <begin position="1"/>
        <end position="358"/>
    </location>
</feature>
<feature type="modified residue" description="N5-methylglutamine" evidence="1">
    <location>
        <position position="233"/>
    </location>
</feature>
<reference key="1">
    <citation type="journal article" date="2008" name="Antimicrob. Agents Chemother.">
        <title>Mutated response regulator graR is responsible for phenotypic conversion of Staphylococcus aureus from heterogeneous vancomycin-intermediate resistance to vancomycin-intermediate resistance.</title>
        <authorList>
            <person name="Neoh H.-M."/>
            <person name="Cui L."/>
            <person name="Yuzawa H."/>
            <person name="Takeuchi F."/>
            <person name="Matsuo M."/>
            <person name="Hiramatsu K."/>
        </authorList>
    </citation>
    <scope>NUCLEOTIDE SEQUENCE [LARGE SCALE GENOMIC DNA]</scope>
    <source>
        <strain>Mu3 / ATCC 700698</strain>
    </source>
</reference>
<comment type="function">
    <text evidence="1">Peptide chain release factor 1 directs the termination of translation in response to the peptide chain termination codons UAG and UAA.</text>
</comment>
<comment type="subcellular location">
    <subcellularLocation>
        <location evidence="1">Cytoplasm</location>
    </subcellularLocation>
</comment>
<comment type="PTM">
    <text evidence="1">Methylated by PrmC. Methylation increases the termination efficiency of RF1.</text>
</comment>
<comment type="similarity">
    <text evidence="1">Belongs to the prokaryotic/mitochondrial release factor family.</text>
</comment>
<name>RF1_STAA1</name>
<organism>
    <name type="scientific">Staphylococcus aureus (strain Mu3 / ATCC 700698)</name>
    <dbReference type="NCBI Taxonomy" id="418127"/>
    <lineage>
        <taxon>Bacteria</taxon>
        <taxon>Bacillati</taxon>
        <taxon>Bacillota</taxon>
        <taxon>Bacilli</taxon>
        <taxon>Bacillales</taxon>
        <taxon>Staphylococcaceae</taxon>
        <taxon>Staphylococcus</taxon>
    </lineage>
</organism>
<accession>A7X4W4</accession>
<dbReference type="EMBL" id="AP009324">
    <property type="protein sequence ID" value="BAF78985.1"/>
    <property type="molecule type" value="Genomic_DNA"/>
</dbReference>
<dbReference type="RefSeq" id="WP_000460242.1">
    <property type="nucleotide sequence ID" value="NZ_CTYB01000015.1"/>
</dbReference>
<dbReference type="SMR" id="A7X4W4"/>
<dbReference type="KEGG" id="saw:SAHV_2102"/>
<dbReference type="HOGENOM" id="CLU_036856_0_1_9"/>
<dbReference type="GO" id="GO:0005737">
    <property type="term" value="C:cytoplasm"/>
    <property type="evidence" value="ECO:0007669"/>
    <property type="project" value="UniProtKB-SubCell"/>
</dbReference>
<dbReference type="GO" id="GO:0016149">
    <property type="term" value="F:translation release factor activity, codon specific"/>
    <property type="evidence" value="ECO:0007669"/>
    <property type="project" value="UniProtKB-UniRule"/>
</dbReference>
<dbReference type="FunFam" id="3.30.160.20:FF:000004">
    <property type="entry name" value="Peptide chain release factor 1"/>
    <property type="match status" value="1"/>
</dbReference>
<dbReference type="FunFam" id="3.30.70.1660:FF:000002">
    <property type="entry name" value="Peptide chain release factor 1"/>
    <property type="match status" value="1"/>
</dbReference>
<dbReference type="FunFam" id="3.30.70.1660:FF:000004">
    <property type="entry name" value="Peptide chain release factor 1"/>
    <property type="match status" value="1"/>
</dbReference>
<dbReference type="Gene3D" id="3.30.160.20">
    <property type="match status" value="1"/>
</dbReference>
<dbReference type="Gene3D" id="3.30.70.1660">
    <property type="match status" value="1"/>
</dbReference>
<dbReference type="Gene3D" id="6.10.140.1950">
    <property type="match status" value="1"/>
</dbReference>
<dbReference type="HAMAP" id="MF_00093">
    <property type="entry name" value="Rel_fac_1"/>
    <property type="match status" value="1"/>
</dbReference>
<dbReference type="InterPro" id="IPR005139">
    <property type="entry name" value="PCRF"/>
</dbReference>
<dbReference type="InterPro" id="IPR000352">
    <property type="entry name" value="Pep_chain_release_fac_I"/>
</dbReference>
<dbReference type="InterPro" id="IPR045853">
    <property type="entry name" value="Pep_chain_release_fac_I_sf"/>
</dbReference>
<dbReference type="InterPro" id="IPR050057">
    <property type="entry name" value="Prokaryotic/Mito_RF"/>
</dbReference>
<dbReference type="InterPro" id="IPR004373">
    <property type="entry name" value="RF-1"/>
</dbReference>
<dbReference type="NCBIfam" id="TIGR00019">
    <property type="entry name" value="prfA"/>
    <property type="match status" value="1"/>
</dbReference>
<dbReference type="NCBIfam" id="NF001859">
    <property type="entry name" value="PRK00591.1"/>
    <property type="match status" value="1"/>
</dbReference>
<dbReference type="PANTHER" id="PTHR43804">
    <property type="entry name" value="LD18447P"/>
    <property type="match status" value="1"/>
</dbReference>
<dbReference type="PANTHER" id="PTHR43804:SF7">
    <property type="entry name" value="LD18447P"/>
    <property type="match status" value="1"/>
</dbReference>
<dbReference type="Pfam" id="PF03462">
    <property type="entry name" value="PCRF"/>
    <property type="match status" value="1"/>
</dbReference>
<dbReference type="Pfam" id="PF00472">
    <property type="entry name" value="RF-1"/>
    <property type="match status" value="1"/>
</dbReference>
<dbReference type="SMART" id="SM00937">
    <property type="entry name" value="PCRF"/>
    <property type="match status" value="1"/>
</dbReference>
<dbReference type="SUPFAM" id="SSF75620">
    <property type="entry name" value="Release factor"/>
    <property type="match status" value="1"/>
</dbReference>
<dbReference type="PROSITE" id="PS00745">
    <property type="entry name" value="RF_PROK_I"/>
    <property type="match status" value="1"/>
</dbReference>